<organism>
    <name type="scientific">Drosophila melanogaster</name>
    <name type="common">Fruit fly</name>
    <dbReference type="NCBI Taxonomy" id="7227"/>
    <lineage>
        <taxon>Eukaryota</taxon>
        <taxon>Metazoa</taxon>
        <taxon>Ecdysozoa</taxon>
        <taxon>Arthropoda</taxon>
        <taxon>Hexapoda</taxon>
        <taxon>Insecta</taxon>
        <taxon>Pterygota</taxon>
        <taxon>Neoptera</taxon>
        <taxon>Endopterygota</taxon>
        <taxon>Diptera</taxon>
        <taxon>Brachycera</taxon>
        <taxon>Muscomorpha</taxon>
        <taxon>Ephydroidea</taxon>
        <taxon>Drosophilidae</taxon>
        <taxon>Drosophila</taxon>
        <taxon>Sophophora</taxon>
    </lineage>
</organism>
<evidence type="ECO:0000250" key="1"/>
<evidence type="ECO:0000255" key="2">
    <source>
        <dbReference type="PROSITE-ProRule" id="PRU00808"/>
    </source>
</evidence>
<evidence type="ECO:0000305" key="3"/>
<feature type="chain" id="PRO_0000124154" description="Proteasome subunit alpha type-7-1A">
    <location>
        <begin position="1"/>
        <end position="249"/>
    </location>
</feature>
<feature type="sequence variant" description="In strain: CPA-46.">
    <original>R</original>
    <variation>P</variation>
    <location>
        <position position="29"/>
    </location>
</feature>
<feature type="sequence variant" description="In strain: CPA-46.">
    <original>N</original>
    <variation>K</variation>
    <location>
        <position position="236"/>
    </location>
</feature>
<feature type="sequence conflict" description="In Ref. 1; AAC47280." evidence="3" ref="1">
    <original>A</original>
    <variation>G</variation>
    <location>
        <position position="24"/>
    </location>
</feature>
<feature type="sequence conflict" description="In Ref. 1; AAC47280." evidence="3" ref="1">
    <original>C</original>
    <variation>V</variation>
    <location>
        <position position="123"/>
    </location>
</feature>
<feature type="sequence conflict" description="In Ref. 1; AAC47280." evidence="3" ref="1">
    <original>RP</original>
    <variation>PS</variation>
    <location>
        <begin position="127"/>
        <end position="128"/>
    </location>
</feature>
<keyword id="KW-0963">Cytoplasm</keyword>
<keyword id="KW-0539">Nucleus</keyword>
<keyword id="KW-0647">Proteasome</keyword>
<keyword id="KW-1185">Reference proteome</keyword>
<name>PSA72_DROME</name>
<accession>Q24178</accession>
<accession>Q6QH19</accession>
<accession>Q8T8U0</accession>
<accession>Q9VDJ1</accession>
<protein>
    <recommendedName>
        <fullName>Proteasome subunit alpha type-7-1A</fullName>
    </recommendedName>
    <alternativeName>
        <fullName>Testis-specific alpha4-t1 proteasome subunit</fullName>
    </alternativeName>
    <alternativeName>
        <fullName>Testis-specific proteasome 28 kDa subunit 1A</fullName>
    </alternativeName>
</protein>
<sequence>MSSRYGRALTIFSPDGHLLQVEYAQEAVRKGSTAVGVRGANCVVLGVEKSSVSEMQEDRTVRKISMLDRHVALAFAGLTADARILINRGQVECQSHRLNFENQVTLEYITRYLAQLKQKYTQCNGRRPFGISCLIGGIDADGSARLFHTEPSGIFHEYKATATGRWANTVREFFEKAYSDHEVTTKCDAIKLAMRALLEVTQMSQMRLEVAVLENGKPMKMLDSVVISEIVKIVQNEKELQAKAHKMKR</sequence>
<gene>
    <name type="primary">Prosalpha4T1</name>
    <name type="synonym">Pros28.1A</name>
    <name type="ORF">CG17268</name>
</gene>
<reference key="1">
    <citation type="journal article" date="1996" name="Genetics">
        <title>Duplicated proteasome subunit genes in Drosophila melanogaster encoding testes-specific isoforms.</title>
        <authorList>
            <person name="Yuan X."/>
            <person name="Miller M."/>
            <person name="Belote J.M."/>
        </authorList>
    </citation>
    <scope>NUCLEOTIDE SEQUENCE [GENOMIC DNA]</scope>
</reference>
<reference key="2">
    <citation type="journal article" date="2004" name="Genetics">
        <title>Rapid evolution through gene duplication and subfunctionalization of the testes-specific alpha4 proteasome subunits in Drosophila.</title>
        <authorList>
            <person name="Torgerson D.G."/>
            <person name="Singh R.S."/>
        </authorList>
    </citation>
    <scope>NUCLEOTIDE SEQUENCE [GENOMIC DNA]</scope>
    <source>
        <strain>CPA-129</strain>
        <strain>CPA-46</strain>
        <strain>Z(H)12</strain>
        <strain>Z(H)16</strain>
        <strain>Z(H)34</strain>
    </source>
</reference>
<reference key="3">
    <citation type="journal article" date="2000" name="Science">
        <title>The genome sequence of Drosophila melanogaster.</title>
        <authorList>
            <person name="Adams M.D."/>
            <person name="Celniker S.E."/>
            <person name="Holt R.A."/>
            <person name="Evans C.A."/>
            <person name="Gocayne J.D."/>
            <person name="Amanatides P.G."/>
            <person name="Scherer S.E."/>
            <person name="Li P.W."/>
            <person name="Hoskins R.A."/>
            <person name="Galle R.F."/>
            <person name="George R.A."/>
            <person name="Lewis S.E."/>
            <person name="Richards S."/>
            <person name="Ashburner M."/>
            <person name="Henderson S.N."/>
            <person name="Sutton G.G."/>
            <person name="Wortman J.R."/>
            <person name="Yandell M.D."/>
            <person name="Zhang Q."/>
            <person name="Chen L.X."/>
            <person name="Brandon R.C."/>
            <person name="Rogers Y.-H.C."/>
            <person name="Blazej R.G."/>
            <person name="Champe M."/>
            <person name="Pfeiffer B.D."/>
            <person name="Wan K.H."/>
            <person name="Doyle C."/>
            <person name="Baxter E.G."/>
            <person name="Helt G."/>
            <person name="Nelson C.R."/>
            <person name="Miklos G.L.G."/>
            <person name="Abril J.F."/>
            <person name="Agbayani A."/>
            <person name="An H.-J."/>
            <person name="Andrews-Pfannkoch C."/>
            <person name="Baldwin D."/>
            <person name="Ballew R.M."/>
            <person name="Basu A."/>
            <person name="Baxendale J."/>
            <person name="Bayraktaroglu L."/>
            <person name="Beasley E.M."/>
            <person name="Beeson K.Y."/>
            <person name="Benos P.V."/>
            <person name="Berman B.P."/>
            <person name="Bhandari D."/>
            <person name="Bolshakov S."/>
            <person name="Borkova D."/>
            <person name="Botchan M.R."/>
            <person name="Bouck J."/>
            <person name="Brokstein P."/>
            <person name="Brottier P."/>
            <person name="Burtis K.C."/>
            <person name="Busam D.A."/>
            <person name="Butler H."/>
            <person name="Cadieu E."/>
            <person name="Center A."/>
            <person name="Chandra I."/>
            <person name="Cherry J.M."/>
            <person name="Cawley S."/>
            <person name="Dahlke C."/>
            <person name="Davenport L.B."/>
            <person name="Davies P."/>
            <person name="de Pablos B."/>
            <person name="Delcher A."/>
            <person name="Deng Z."/>
            <person name="Mays A.D."/>
            <person name="Dew I."/>
            <person name="Dietz S.M."/>
            <person name="Dodson K."/>
            <person name="Doup L.E."/>
            <person name="Downes M."/>
            <person name="Dugan-Rocha S."/>
            <person name="Dunkov B.C."/>
            <person name="Dunn P."/>
            <person name="Durbin K.J."/>
            <person name="Evangelista C.C."/>
            <person name="Ferraz C."/>
            <person name="Ferriera S."/>
            <person name="Fleischmann W."/>
            <person name="Fosler C."/>
            <person name="Gabrielian A.E."/>
            <person name="Garg N.S."/>
            <person name="Gelbart W.M."/>
            <person name="Glasser K."/>
            <person name="Glodek A."/>
            <person name="Gong F."/>
            <person name="Gorrell J.H."/>
            <person name="Gu Z."/>
            <person name="Guan P."/>
            <person name="Harris M."/>
            <person name="Harris N.L."/>
            <person name="Harvey D.A."/>
            <person name="Heiman T.J."/>
            <person name="Hernandez J.R."/>
            <person name="Houck J."/>
            <person name="Hostin D."/>
            <person name="Houston K.A."/>
            <person name="Howland T.J."/>
            <person name="Wei M.-H."/>
            <person name="Ibegwam C."/>
            <person name="Jalali M."/>
            <person name="Kalush F."/>
            <person name="Karpen G.H."/>
            <person name="Ke Z."/>
            <person name="Kennison J.A."/>
            <person name="Ketchum K.A."/>
            <person name="Kimmel B.E."/>
            <person name="Kodira C.D."/>
            <person name="Kraft C.L."/>
            <person name="Kravitz S."/>
            <person name="Kulp D."/>
            <person name="Lai Z."/>
            <person name="Lasko P."/>
            <person name="Lei Y."/>
            <person name="Levitsky A.A."/>
            <person name="Li J.H."/>
            <person name="Li Z."/>
            <person name="Liang Y."/>
            <person name="Lin X."/>
            <person name="Liu X."/>
            <person name="Mattei B."/>
            <person name="McIntosh T.C."/>
            <person name="McLeod M.P."/>
            <person name="McPherson D."/>
            <person name="Merkulov G."/>
            <person name="Milshina N.V."/>
            <person name="Mobarry C."/>
            <person name="Morris J."/>
            <person name="Moshrefi A."/>
            <person name="Mount S.M."/>
            <person name="Moy M."/>
            <person name="Murphy B."/>
            <person name="Murphy L."/>
            <person name="Muzny D.M."/>
            <person name="Nelson D.L."/>
            <person name="Nelson D.R."/>
            <person name="Nelson K.A."/>
            <person name="Nixon K."/>
            <person name="Nusskern D.R."/>
            <person name="Pacleb J.M."/>
            <person name="Palazzolo M."/>
            <person name="Pittman G.S."/>
            <person name="Pan S."/>
            <person name="Pollard J."/>
            <person name="Puri V."/>
            <person name="Reese M.G."/>
            <person name="Reinert K."/>
            <person name="Remington K."/>
            <person name="Saunders R.D.C."/>
            <person name="Scheeler F."/>
            <person name="Shen H."/>
            <person name="Shue B.C."/>
            <person name="Siden-Kiamos I."/>
            <person name="Simpson M."/>
            <person name="Skupski M.P."/>
            <person name="Smith T.J."/>
            <person name="Spier E."/>
            <person name="Spradling A.C."/>
            <person name="Stapleton M."/>
            <person name="Strong R."/>
            <person name="Sun E."/>
            <person name="Svirskas R."/>
            <person name="Tector C."/>
            <person name="Turner R."/>
            <person name="Venter E."/>
            <person name="Wang A.H."/>
            <person name="Wang X."/>
            <person name="Wang Z.-Y."/>
            <person name="Wassarman D.A."/>
            <person name="Weinstock G.M."/>
            <person name="Weissenbach J."/>
            <person name="Williams S.M."/>
            <person name="Woodage T."/>
            <person name="Worley K.C."/>
            <person name="Wu D."/>
            <person name="Yang S."/>
            <person name="Yao Q.A."/>
            <person name="Ye J."/>
            <person name="Yeh R.-F."/>
            <person name="Zaveri J.S."/>
            <person name="Zhan M."/>
            <person name="Zhang G."/>
            <person name="Zhao Q."/>
            <person name="Zheng L."/>
            <person name="Zheng X.H."/>
            <person name="Zhong F.N."/>
            <person name="Zhong W."/>
            <person name="Zhou X."/>
            <person name="Zhu S.C."/>
            <person name="Zhu X."/>
            <person name="Smith H.O."/>
            <person name="Gibbs R.A."/>
            <person name="Myers E.W."/>
            <person name="Rubin G.M."/>
            <person name="Venter J.C."/>
        </authorList>
    </citation>
    <scope>NUCLEOTIDE SEQUENCE [LARGE SCALE GENOMIC DNA]</scope>
    <source>
        <strain>Berkeley</strain>
    </source>
</reference>
<reference key="4">
    <citation type="journal article" date="2002" name="Genome Biol.">
        <title>Annotation of the Drosophila melanogaster euchromatic genome: a systematic review.</title>
        <authorList>
            <person name="Misra S."/>
            <person name="Crosby M.A."/>
            <person name="Mungall C.J."/>
            <person name="Matthews B.B."/>
            <person name="Campbell K.S."/>
            <person name="Hradecky P."/>
            <person name="Huang Y."/>
            <person name="Kaminker J.S."/>
            <person name="Millburn G.H."/>
            <person name="Prochnik S.E."/>
            <person name="Smith C.D."/>
            <person name="Tupy J.L."/>
            <person name="Whitfield E.J."/>
            <person name="Bayraktaroglu L."/>
            <person name="Berman B.P."/>
            <person name="Bettencourt B.R."/>
            <person name="Celniker S.E."/>
            <person name="de Grey A.D.N.J."/>
            <person name="Drysdale R.A."/>
            <person name="Harris N.L."/>
            <person name="Richter J."/>
            <person name="Russo S."/>
            <person name="Schroeder A.J."/>
            <person name="Shu S.Q."/>
            <person name="Stapleton M."/>
            <person name="Yamada C."/>
            <person name="Ashburner M."/>
            <person name="Gelbart W.M."/>
            <person name="Rubin G.M."/>
            <person name="Lewis S.E."/>
        </authorList>
    </citation>
    <scope>GENOME REANNOTATION</scope>
    <source>
        <strain>Berkeley</strain>
    </source>
</reference>
<reference key="5">
    <citation type="submission" date="2003-02" db="EMBL/GenBank/DDBJ databases">
        <authorList>
            <person name="Stapleton M."/>
            <person name="Brokstein P."/>
            <person name="Hong L."/>
            <person name="Agbayani A."/>
            <person name="Carlson J.W."/>
            <person name="Champe M."/>
            <person name="Chavez C."/>
            <person name="Dorsett V."/>
            <person name="Dresnek D."/>
            <person name="Farfan D."/>
            <person name="Frise E."/>
            <person name="George R.A."/>
            <person name="Gonzalez M."/>
            <person name="Guarin H."/>
            <person name="Kronmiller B."/>
            <person name="Li P.W."/>
            <person name="Liao G."/>
            <person name="Miranda A."/>
            <person name="Mungall C.J."/>
            <person name="Nunoo J."/>
            <person name="Pacleb J.M."/>
            <person name="Paragas V."/>
            <person name="Park S."/>
            <person name="Patel S."/>
            <person name="Phouanenavong S."/>
            <person name="Wan K.H."/>
            <person name="Yu C."/>
            <person name="Lewis S.E."/>
            <person name="Rubin G.M."/>
            <person name="Celniker S.E."/>
        </authorList>
    </citation>
    <scope>NUCLEOTIDE SEQUENCE [LARGE SCALE MRNA]</scope>
    <source>
        <strain>Berkeley</strain>
        <tissue>Testis</tissue>
    </source>
</reference>
<comment type="function">
    <text>The proteasome is a multicatalytic proteinase complex which is characterized by its ability to cleave peptides with Arg, Phe, Tyr, Leu, and Glu adjacent to the leaving group at neutral or slightly basic pH. The proteasome has an ATP-dependent proteolytic activity.</text>
</comment>
<comment type="subunit">
    <text evidence="1">The 26S proteasome consists of a 20S proteasome core and two 19S regulatory subunits. The 20S proteasome core is composed of 28 subunits that are arranged in four stacked rings, resulting in a barrel-shaped structure. The two end rings are each formed by seven alpha subunits, and the two central rings are each formed by seven beta subunits. The catalytic chamber with the active sites is on the inside of the barrel (By similarity).</text>
</comment>
<comment type="subcellular location">
    <subcellularLocation>
        <location evidence="1">Cytoplasm</location>
    </subcellularLocation>
    <subcellularLocation>
        <location evidence="1">Nucleus</location>
    </subcellularLocation>
</comment>
<comment type="tissue specificity">
    <text>Testis specific.</text>
</comment>
<comment type="similarity">
    <text evidence="2">Belongs to the peptidase T1A family.</text>
</comment>
<dbReference type="EMBL" id="U46008">
    <property type="protein sequence ID" value="AAC47280.1"/>
    <property type="molecule type" value="Genomic_DNA"/>
</dbReference>
<dbReference type="EMBL" id="AY542403">
    <property type="protein sequence ID" value="AAS86247.1"/>
    <property type="molecule type" value="Genomic_DNA"/>
</dbReference>
<dbReference type="EMBL" id="AY542404">
    <property type="protein sequence ID" value="AAS86248.1"/>
    <property type="molecule type" value="Genomic_DNA"/>
</dbReference>
<dbReference type="EMBL" id="AY542405">
    <property type="protein sequence ID" value="AAS86249.1"/>
    <property type="molecule type" value="Genomic_DNA"/>
</dbReference>
<dbReference type="EMBL" id="AY542406">
    <property type="protein sequence ID" value="AAS86250.1"/>
    <property type="molecule type" value="Genomic_DNA"/>
</dbReference>
<dbReference type="EMBL" id="AY542407">
    <property type="protein sequence ID" value="AAS86251.1"/>
    <property type="molecule type" value="Genomic_DNA"/>
</dbReference>
<dbReference type="EMBL" id="AY542408">
    <property type="protein sequence ID" value="AAS86252.1"/>
    <property type="molecule type" value="Genomic_DNA"/>
</dbReference>
<dbReference type="EMBL" id="AY542409">
    <property type="protein sequence ID" value="AAS86253.1"/>
    <property type="molecule type" value="Genomic_DNA"/>
</dbReference>
<dbReference type="EMBL" id="AE014297">
    <property type="protein sequence ID" value="AAF55802.1"/>
    <property type="molecule type" value="Genomic_DNA"/>
</dbReference>
<dbReference type="EMBL" id="AY075276">
    <property type="protein sequence ID" value="AAL68143.1"/>
    <property type="molecule type" value="mRNA"/>
</dbReference>
<dbReference type="PIR" id="S72225">
    <property type="entry name" value="S72225"/>
</dbReference>
<dbReference type="RefSeq" id="NP_650910.1">
    <property type="nucleotide sequence ID" value="NM_142653.3"/>
</dbReference>
<dbReference type="SMR" id="Q24178"/>
<dbReference type="BioGRID" id="67432">
    <property type="interactions" value="1"/>
</dbReference>
<dbReference type="ComplexPortal" id="CPX-9087">
    <property type="entry name" value="26S proteasome complex, testis-specific variant"/>
</dbReference>
<dbReference type="DIP" id="DIP-19969N"/>
<dbReference type="FunCoup" id="Q24178">
    <property type="interactions" value="749"/>
</dbReference>
<dbReference type="IntAct" id="Q24178">
    <property type="interactions" value="2"/>
</dbReference>
<dbReference type="STRING" id="7227.FBpp0083336"/>
<dbReference type="PaxDb" id="7227-FBpp0083336"/>
<dbReference type="EnsemblMetazoa" id="FBtr0083928">
    <property type="protein sequence ID" value="FBpp0083336"/>
    <property type="gene ID" value="FBgn0265606"/>
</dbReference>
<dbReference type="GeneID" id="42457"/>
<dbReference type="KEGG" id="dme:Dmel_CG17268"/>
<dbReference type="AGR" id="FB:FBgn0265606"/>
<dbReference type="CTD" id="42457"/>
<dbReference type="FlyBase" id="FBgn0265606">
    <property type="gene designation" value="Prosalpha4T1"/>
</dbReference>
<dbReference type="VEuPathDB" id="VectorBase:FBgn0265606"/>
<dbReference type="eggNOG" id="KOG0183">
    <property type="taxonomic scope" value="Eukaryota"/>
</dbReference>
<dbReference type="HOGENOM" id="CLU_035750_4_0_1"/>
<dbReference type="InParanoid" id="Q24178"/>
<dbReference type="OMA" id="HEVTTKC"/>
<dbReference type="OrthoDB" id="3145928at2759"/>
<dbReference type="PhylomeDB" id="Q24178"/>
<dbReference type="SignaLink" id="Q24178"/>
<dbReference type="BioGRID-ORCS" id="42457">
    <property type="hits" value="0 hits in 3 CRISPR screens"/>
</dbReference>
<dbReference type="GenomeRNAi" id="42457"/>
<dbReference type="PRO" id="PR:Q24178"/>
<dbReference type="Proteomes" id="UP000000803">
    <property type="component" value="Chromosome 3R"/>
</dbReference>
<dbReference type="Bgee" id="FBgn0265606">
    <property type="expression patterns" value="Expressed in early-mid elongation-stage spermatid (Drosophila) in testis and 13 other cell types or tissues"/>
</dbReference>
<dbReference type="ExpressionAtlas" id="Q24178">
    <property type="expression patterns" value="baseline and differential"/>
</dbReference>
<dbReference type="GO" id="GO:0005737">
    <property type="term" value="C:cytoplasm"/>
    <property type="evidence" value="ECO:0007669"/>
    <property type="project" value="UniProtKB-SubCell"/>
</dbReference>
<dbReference type="GO" id="GO:0005634">
    <property type="term" value="C:nucleus"/>
    <property type="evidence" value="ECO:0000318"/>
    <property type="project" value="GO_Central"/>
</dbReference>
<dbReference type="GO" id="GO:0019773">
    <property type="term" value="C:proteasome core complex, alpha-subunit complex"/>
    <property type="evidence" value="ECO:0000250"/>
    <property type="project" value="UniProtKB"/>
</dbReference>
<dbReference type="GO" id="GO:0043161">
    <property type="term" value="P:proteasome-mediated ubiquitin-dependent protein catabolic process"/>
    <property type="evidence" value="ECO:0000250"/>
    <property type="project" value="FlyBase"/>
</dbReference>
<dbReference type="CDD" id="cd03755">
    <property type="entry name" value="proteasome_alpha_type_7"/>
    <property type="match status" value="1"/>
</dbReference>
<dbReference type="FunFam" id="3.60.20.10:FF:000004">
    <property type="entry name" value="Proteasome subunit alpha type-4"/>
    <property type="match status" value="1"/>
</dbReference>
<dbReference type="Gene3D" id="3.60.20.10">
    <property type="entry name" value="Glutamine Phosphoribosylpyrophosphate, subunit 1, domain 1"/>
    <property type="match status" value="1"/>
</dbReference>
<dbReference type="InterPro" id="IPR029055">
    <property type="entry name" value="Ntn_hydrolases_N"/>
</dbReference>
<dbReference type="InterPro" id="IPR050115">
    <property type="entry name" value="Proteasome_alpha"/>
</dbReference>
<dbReference type="InterPro" id="IPR023332">
    <property type="entry name" value="Proteasome_alpha-type"/>
</dbReference>
<dbReference type="InterPro" id="IPR000426">
    <property type="entry name" value="Proteasome_asu_N"/>
</dbReference>
<dbReference type="InterPro" id="IPR001353">
    <property type="entry name" value="Proteasome_sua/b"/>
</dbReference>
<dbReference type="NCBIfam" id="NF003075">
    <property type="entry name" value="PRK03996.1"/>
    <property type="match status" value="1"/>
</dbReference>
<dbReference type="PANTHER" id="PTHR11599">
    <property type="entry name" value="PROTEASOME SUBUNIT ALPHA/BETA"/>
    <property type="match status" value="1"/>
</dbReference>
<dbReference type="Pfam" id="PF00227">
    <property type="entry name" value="Proteasome"/>
    <property type="match status" value="1"/>
</dbReference>
<dbReference type="Pfam" id="PF10584">
    <property type="entry name" value="Proteasome_A_N"/>
    <property type="match status" value="1"/>
</dbReference>
<dbReference type="SMART" id="SM00948">
    <property type="entry name" value="Proteasome_A_N"/>
    <property type="match status" value="1"/>
</dbReference>
<dbReference type="SUPFAM" id="SSF56235">
    <property type="entry name" value="N-terminal nucleophile aminohydrolases (Ntn hydrolases)"/>
    <property type="match status" value="1"/>
</dbReference>
<dbReference type="PROSITE" id="PS00388">
    <property type="entry name" value="PROTEASOME_ALPHA_1"/>
    <property type="match status" value="1"/>
</dbReference>
<dbReference type="PROSITE" id="PS51475">
    <property type="entry name" value="PROTEASOME_ALPHA_2"/>
    <property type="match status" value="1"/>
</dbReference>
<proteinExistence type="evidence at transcript level"/>